<dbReference type="EC" id="2.1.1.-"/>
<dbReference type="EMBL" id="CP000555">
    <property type="protein sequence ID" value="ABM96566.1"/>
    <property type="molecule type" value="Genomic_DNA"/>
</dbReference>
<dbReference type="RefSeq" id="WP_011831186.1">
    <property type="nucleotide sequence ID" value="NC_008825.1"/>
</dbReference>
<dbReference type="SMR" id="A2SLX7"/>
<dbReference type="STRING" id="420662.Mpe_A3613"/>
<dbReference type="KEGG" id="mpt:Mpe_A3613"/>
<dbReference type="eggNOG" id="COG0820">
    <property type="taxonomic scope" value="Bacteria"/>
</dbReference>
<dbReference type="HOGENOM" id="CLU_029101_3_3_4"/>
<dbReference type="Proteomes" id="UP000000366">
    <property type="component" value="Chromosome"/>
</dbReference>
<dbReference type="GO" id="GO:0005737">
    <property type="term" value="C:cytoplasm"/>
    <property type="evidence" value="ECO:0007669"/>
    <property type="project" value="UniProtKB-SubCell"/>
</dbReference>
<dbReference type="GO" id="GO:0051539">
    <property type="term" value="F:4 iron, 4 sulfur cluster binding"/>
    <property type="evidence" value="ECO:0007669"/>
    <property type="project" value="UniProtKB-KW"/>
</dbReference>
<dbReference type="GO" id="GO:0046872">
    <property type="term" value="F:metal ion binding"/>
    <property type="evidence" value="ECO:0007669"/>
    <property type="project" value="UniProtKB-KW"/>
</dbReference>
<dbReference type="GO" id="GO:0008173">
    <property type="term" value="F:RNA methyltransferase activity"/>
    <property type="evidence" value="ECO:0007669"/>
    <property type="project" value="InterPro"/>
</dbReference>
<dbReference type="GO" id="GO:0070475">
    <property type="term" value="P:rRNA base methylation"/>
    <property type="evidence" value="ECO:0007669"/>
    <property type="project" value="TreeGrafter"/>
</dbReference>
<dbReference type="GO" id="GO:0030488">
    <property type="term" value="P:tRNA methylation"/>
    <property type="evidence" value="ECO:0007669"/>
    <property type="project" value="TreeGrafter"/>
</dbReference>
<dbReference type="Gene3D" id="3.20.20.70">
    <property type="entry name" value="Aldolase class I"/>
    <property type="match status" value="1"/>
</dbReference>
<dbReference type="InterPro" id="IPR013785">
    <property type="entry name" value="Aldolase_TIM"/>
</dbReference>
<dbReference type="InterPro" id="IPR040072">
    <property type="entry name" value="Methyltransferase_A"/>
</dbReference>
<dbReference type="InterPro" id="IPR004383">
    <property type="entry name" value="rRNA_lsu_MTrfase_RlmN/Cfr"/>
</dbReference>
<dbReference type="InterPro" id="IPR007197">
    <property type="entry name" value="rSAM"/>
</dbReference>
<dbReference type="NCBIfam" id="NF011034">
    <property type="entry name" value="PRK14464.1"/>
    <property type="match status" value="1"/>
</dbReference>
<dbReference type="PANTHER" id="PTHR30544">
    <property type="entry name" value="23S RRNA METHYLTRANSFERASE"/>
    <property type="match status" value="1"/>
</dbReference>
<dbReference type="PANTHER" id="PTHR30544:SF5">
    <property type="entry name" value="RADICAL SAM CORE DOMAIN-CONTAINING PROTEIN"/>
    <property type="match status" value="1"/>
</dbReference>
<dbReference type="Pfam" id="PF04055">
    <property type="entry name" value="Radical_SAM"/>
    <property type="match status" value="1"/>
</dbReference>
<dbReference type="PIRSF" id="PIRSF006004">
    <property type="entry name" value="CHP00048"/>
    <property type="match status" value="1"/>
</dbReference>
<dbReference type="SFLD" id="SFLDF00275">
    <property type="entry name" value="adenosine_C2_methyltransferase"/>
    <property type="match status" value="1"/>
</dbReference>
<dbReference type="SFLD" id="SFLDG01062">
    <property type="entry name" value="methyltransferase_(Class_A)"/>
    <property type="match status" value="1"/>
</dbReference>
<dbReference type="SUPFAM" id="SSF102114">
    <property type="entry name" value="Radical SAM enzymes"/>
    <property type="match status" value="1"/>
</dbReference>
<dbReference type="PROSITE" id="PS51918">
    <property type="entry name" value="RADICAL_SAM"/>
    <property type="match status" value="1"/>
</dbReference>
<organism>
    <name type="scientific">Methylibium petroleiphilum (strain ATCC BAA-1232 / LMG 22953 / PM1)</name>
    <dbReference type="NCBI Taxonomy" id="420662"/>
    <lineage>
        <taxon>Bacteria</taxon>
        <taxon>Pseudomonadati</taxon>
        <taxon>Pseudomonadota</taxon>
        <taxon>Betaproteobacteria</taxon>
        <taxon>Burkholderiales</taxon>
        <taxon>Sphaerotilaceae</taxon>
        <taxon>Methylibium</taxon>
    </lineage>
</organism>
<gene>
    <name type="ordered locus">Mpe_A3613</name>
</gene>
<accession>A2SLX7</accession>
<reference key="1">
    <citation type="journal article" date="2007" name="J. Bacteriol.">
        <title>Whole-genome analysis of the methyl tert-butyl ether-degrading beta-proteobacterium Methylibium petroleiphilum PM1.</title>
        <authorList>
            <person name="Kane S.R."/>
            <person name="Chakicherla A.Y."/>
            <person name="Chain P.S.G."/>
            <person name="Schmidt R."/>
            <person name="Shin M.W."/>
            <person name="Legler T.C."/>
            <person name="Scow K.M."/>
            <person name="Larimer F.W."/>
            <person name="Lucas S.M."/>
            <person name="Richardson P.M."/>
            <person name="Hristova K.R."/>
        </authorList>
    </citation>
    <scope>NUCLEOTIDE SEQUENCE [LARGE SCALE GENOMIC DNA]</scope>
    <source>
        <strain>ATCC BAA-1232 / LMG 22953 / PM1</strain>
    </source>
</reference>
<sequence>MRIEQLREHLRALGARPGHEQSVLRHWACALPQQRRSAREDVLPLALREALPALEAELQGLARLRSEHSAEDGSARLLVALADGQTVESVLLPRDGLCVSTQVGCAVGCVFCMTGQGGLLRQLGSAEIVAQVALARGHRAVKKVVFMGMGEPAHNLDNVLEAIELLGTAGGIGHKNLVFSTVGDERVFERLPQGAVKPALALSLHTTKPELRAQLLPRAPRIAPEDLVAHGERYARATGYPVQYQWTLIDGVNDGDDELDGIVRLLAGRYAVMNLIPYNTVDGLAFQRPAWERAVAMAGALHRRGVLTKLRRSAGQDVEGGCGQLRARALGGARWIKIEPVSGTGAHHVDQF</sequence>
<protein>
    <recommendedName>
        <fullName>Probable RNA methyltransferase Mpe_A3613</fullName>
        <ecNumber>2.1.1.-</ecNumber>
    </recommendedName>
</protein>
<feature type="chain" id="PRO_0000350251" description="Probable RNA methyltransferase Mpe_A3613">
    <location>
        <begin position="1"/>
        <end position="352"/>
    </location>
</feature>
<feature type="domain" description="Radical SAM core" evidence="3">
    <location>
        <begin position="91"/>
        <end position="317"/>
    </location>
</feature>
<feature type="active site" description="Proton acceptor" evidence="2">
    <location>
        <position position="88"/>
    </location>
</feature>
<feature type="active site" description="S-methylcysteine intermediate" evidence="1">
    <location>
        <position position="322"/>
    </location>
</feature>
<feature type="binding site" evidence="1">
    <location>
        <position position="105"/>
    </location>
    <ligand>
        <name>[4Fe-4S] cluster</name>
        <dbReference type="ChEBI" id="CHEBI:49883"/>
        <note>4Fe-4S-S-AdoMet</note>
    </ligand>
</feature>
<feature type="binding site" evidence="1">
    <location>
        <position position="109"/>
    </location>
    <ligand>
        <name>[4Fe-4S] cluster</name>
        <dbReference type="ChEBI" id="CHEBI:49883"/>
        <note>4Fe-4S-S-AdoMet</note>
    </ligand>
</feature>
<feature type="binding site" evidence="1">
    <location>
        <position position="112"/>
    </location>
    <ligand>
        <name>[4Fe-4S] cluster</name>
        <dbReference type="ChEBI" id="CHEBI:49883"/>
        <note>4Fe-4S-S-AdoMet</note>
    </ligand>
</feature>
<feature type="binding site" evidence="1">
    <location>
        <begin position="150"/>
        <end position="151"/>
    </location>
    <ligand>
        <name>S-adenosyl-L-methionine</name>
        <dbReference type="ChEBI" id="CHEBI:59789"/>
    </ligand>
</feature>
<feature type="binding site" evidence="1">
    <location>
        <position position="180"/>
    </location>
    <ligand>
        <name>S-adenosyl-L-methionine</name>
        <dbReference type="ChEBI" id="CHEBI:59789"/>
    </ligand>
</feature>
<feature type="binding site" evidence="1">
    <location>
        <begin position="203"/>
        <end position="205"/>
    </location>
    <ligand>
        <name>S-adenosyl-L-methionine</name>
        <dbReference type="ChEBI" id="CHEBI:59789"/>
    </ligand>
</feature>
<feature type="binding site" evidence="1">
    <location>
        <position position="279"/>
    </location>
    <ligand>
        <name>S-adenosyl-L-methionine</name>
        <dbReference type="ChEBI" id="CHEBI:59789"/>
    </ligand>
</feature>
<feature type="disulfide bond" description="(transient)" evidence="1">
    <location>
        <begin position="98"/>
        <end position="322"/>
    </location>
</feature>
<comment type="cofactor">
    <cofactor evidence="1">
        <name>[4Fe-4S] cluster</name>
        <dbReference type="ChEBI" id="CHEBI:49883"/>
    </cofactor>
    <text evidence="1">Binds 1 [4Fe-4S] cluster. The cluster is coordinated with 3 cysteines and an exchangeable S-adenosyl-L-methionine.</text>
</comment>
<comment type="subcellular location">
    <subcellularLocation>
        <location evidence="4">Cytoplasm</location>
    </subcellularLocation>
</comment>
<comment type="similarity">
    <text evidence="4">Belongs to the radical SAM superfamily. RlmN family.</text>
</comment>
<keyword id="KW-0004">4Fe-4S</keyword>
<keyword id="KW-0963">Cytoplasm</keyword>
<keyword id="KW-1015">Disulfide bond</keyword>
<keyword id="KW-0408">Iron</keyword>
<keyword id="KW-0411">Iron-sulfur</keyword>
<keyword id="KW-0479">Metal-binding</keyword>
<keyword id="KW-0489">Methyltransferase</keyword>
<keyword id="KW-1185">Reference proteome</keyword>
<keyword id="KW-0949">S-adenosyl-L-methionine</keyword>
<keyword id="KW-0808">Transferase</keyword>
<evidence type="ECO:0000250" key="1"/>
<evidence type="ECO:0000255" key="2"/>
<evidence type="ECO:0000255" key="3">
    <source>
        <dbReference type="PROSITE-ProRule" id="PRU01266"/>
    </source>
</evidence>
<evidence type="ECO:0000305" key="4"/>
<name>Y3613_METPP</name>
<proteinExistence type="inferred from homology"/>